<keyword id="KW-0067">ATP-binding</keyword>
<keyword id="KW-0436">Ligase</keyword>
<keyword id="KW-0460">Magnesium</keyword>
<keyword id="KW-0479">Metal-binding</keyword>
<keyword id="KW-0547">Nucleotide-binding</keyword>
<keyword id="KW-0816">Tricarboxylic acid cycle</keyword>
<accession>Q0BKS4</accession>
<gene>
    <name evidence="1" type="primary">sucC</name>
    <name type="ordered locus">FTH_1504</name>
</gene>
<reference key="1">
    <citation type="journal article" date="2006" name="J. Bacteriol.">
        <title>Chromosome rearrangement and diversification of Francisella tularensis revealed by the type B (OSU18) genome sequence.</title>
        <authorList>
            <person name="Petrosino J.F."/>
            <person name="Xiang Q."/>
            <person name="Karpathy S.E."/>
            <person name="Jiang H."/>
            <person name="Yerrapragada S."/>
            <person name="Liu Y."/>
            <person name="Gioia J."/>
            <person name="Hemphill L."/>
            <person name="Gonzalez A."/>
            <person name="Raghavan T.M."/>
            <person name="Uzman A."/>
            <person name="Fox G.E."/>
            <person name="Highlander S."/>
            <person name="Reichard M."/>
            <person name="Morton R.J."/>
            <person name="Clinkenbeard K.D."/>
            <person name="Weinstock G.M."/>
        </authorList>
    </citation>
    <scope>NUCLEOTIDE SEQUENCE [LARGE SCALE GENOMIC DNA]</scope>
    <source>
        <strain>OSU18</strain>
    </source>
</reference>
<proteinExistence type="inferred from homology"/>
<comment type="function">
    <text evidence="1">Succinyl-CoA synthetase functions in the citric acid cycle (TCA), coupling the hydrolysis of succinyl-CoA to the synthesis of either ATP or GTP and thus represents the only step of substrate-level phosphorylation in the TCA. The beta subunit provides nucleotide specificity of the enzyme and binds the substrate succinate, while the binding sites for coenzyme A and phosphate are found in the alpha subunit.</text>
</comment>
<comment type="catalytic activity">
    <reaction evidence="1">
        <text>succinate + ATP + CoA = succinyl-CoA + ADP + phosphate</text>
        <dbReference type="Rhea" id="RHEA:17661"/>
        <dbReference type="ChEBI" id="CHEBI:30031"/>
        <dbReference type="ChEBI" id="CHEBI:30616"/>
        <dbReference type="ChEBI" id="CHEBI:43474"/>
        <dbReference type="ChEBI" id="CHEBI:57287"/>
        <dbReference type="ChEBI" id="CHEBI:57292"/>
        <dbReference type="ChEBI" id="CHEBI:456216"/>
        <dbReference type="EC" id="6.2.1.5"/>
    </reaction>
    <physiologicalReaction direction="right-to-left" evidence="1">
        <dbReference type="Rhea" id="RHEA:17663"/>
    </physiologicalReaction>
</comment>
<comment type="catalytic activity">
    <reaction evidence="1">
        <text>GTP + succinate + CoA = succinyl-CoA + GDP + phosphate</text>
        <dbReference type="Rhea" id="RHEA:22120"/>
        <dbReference type="ChEBI" id="CHEBI:30031"/>
        <dbReference type="ChEBI" id="CHEBI:37565"/>
        <dbReference type="ChEBI" id="CHEBI:43474"/>
        <dbReference type="ChEBI" id="CHEBI:57287"/>
        <dbReference type="ChEBI" id="CHEBI:57292"/>
        <dbReference type="ChEBI" id="CHEBI:58189"/>
    </reaction>
    <physiologicalReaction direction="right-to-left" evidence="1">
        <dbReference type="Rhea" id="RHEA:22122"/>
    </physiologicalReaction>
</comment>
<comment type="cofactor">
    <cofactor evidence="1">
        <name>Mg(2+)</name>
        <dbReference type="ChEBI" id="CHEBI:18420"/>
    </cofactor>
    <text evidence="1">Binds 1 Mg(2+) ion per subunit.</text>
</comment>
<comment type="pathway">
    <text evidence="1">Carbohydrate metabolism; tricarboxylic acid cycle; succinate from succinyl-CoA (ligase route): step 1/1.</text>
</comment>
<comment type="subunit">
    <text evidence="1">Heterotetramer of two alpha and two beta subunits.</text>
</comment>
<comment type="similarity">
    <text evidence="1">Belongs to the succinate/malate CoA ligase beta subunit family.</text>
</comment>
<feature type="chain" id="PRO_1000082092" description="Succinate--CoA ligase [ADP-forming] subunit beta">
    <location>
        <begin position="1"/>
        <end position="387"/>
    </location>
</feature>
<feature type="domain" description="ATP-grasp" evidence="1">
    <location>
        <begin position="9"/>
        <end position="245"/>
    </location>
</feature>
<feature type="binding site" evidence="1">
    <location>
        <position position="46"/>
    </location>
    <ligand>
        <name>ATP</name>
        <dbReference type="ChEBI" id="CHEBI:30616"/>
    </ligand>
</feature>
<feature type="binding site" evidence="1">
    <location>
        <begin position="53"/>
        <end position="55"/>
    </location>
    <ligand>
        <name>ATP</name>
        <dbReference type="ChEBI" id="CHEBI:30616"/>
    </ligand>
</feature>
<feature type="binding site" evidence="1">
    <location>
        <position position="100"/>
    </location>
    <ligand>
        <name>ATP</name>
        <dbReference type="ChEBI" id="CHEBI:30616"/>
    </ligand>
</feature>
<feature type="binding site" evidence="1">
    <location>
        <position position="103"/>
    </location>
    <ligand>
        <name>ATP</name>
        <dbReference type="ChEBI" id="CHEBI:30616"/>
    </ligand>
</feature>
<feature type="binding site" evidence="1">
    <location>
        <position position="108"/>
    </location>
    <ligand>
        <name>ATP</name>
        <dbReference type="ChEBI" id="CHEBI:30616"/>
    </ligand>
</feature>
<feature type="binding site" evidence="1">
    <location>
        <position position="200"/>
    </location>
    <ligand>
        <name>Mg(2+)</name>
        <dbReference type="ChEBI" id="CHEBI:18420"/>
    </ligand>
</feature>
<feature type="binding site" evidence="1">
    <location>
        <position position="214"/>
    </location>
    <ligand>
        <name>Mg(2+)</name>
        <dbReference type="ChEBI" id="CHEBI:18420"/>
    </ligand>
</feature>
<feature type="binding site" evidence="1">
    <location>
        <position position="265"/>
    </location>
    <ligand>
        <name>substrate</name>
        <note>ligand shared with subunit alpha</note>
    </ligand>
</feature>
<feature type="binding site" evidence="1">
    <location>
        <begin position="322"/>
        <end position="324"/>
    </location>
    <ligand>
        <name>substrate</name>
        <note>ligand shared with subunit alpha</note>
    </ligand>
</feature>
<organism>
    <name type="scientific">Francisella tularensis subsp. holarctica (strain OSU18)</name>
    <dbReference type="NCBI Taxonomy" id="393011"/>
    <lineage>
        <taxon>Bacteria</taxon>
        <taxon>Pseudomonadati</taxon>
        <taxon>Pseudomonadota</taxon>
        <taxon>Gammaproteobacteria</taxon>
        <taxon>Thiotrichales</taxon>
        <taxon>Francisellaceae</taxon>
        <taxon>Francisella</taxon>
    </lineage>
</organism>
<protein>
    <recommendedName>
        <fullName evidence="1">Succinate--CoA ligase [ADP-forming] subunit beta</fullName>
        <ecNumber evidence="1">6.2.1.5</ecNumber>
    </recommendedName>
    <alternativeName>
        <fullName evidence="1">Succinyl-CoA synthetase subunit beta</fullName>
        <shortName evidence="1">SCS-beta</shortName>
    </alternativeName>
</protein>
<dbReference type="EC" id="6.2.1.5" evidence="1"/>
<dbReference type="EMBL" id="CP000437">
    <property type="protein sequence ID" value="ABI83310.1"/>
    <property type="molecule type" value="Genomic_DNA"/>
</dbReference>
<dbReference type="RefSeq" id="WP_011648759.1">
    <property type="nucleotide sequence ID" value="NC_017463.1"/>
</dbReference>
<dbReference type="SMR" id="Q0BKS4"/>
<dbReference type="KEGG" id="fth:FTH_1504"/>
<dbReference type="UniPathway" id="UPA00223">
    <property type="reaction ID" value="UER00999"/>
</dbReference>
<dbReference type="GO" id="GO:0005829">
    <property type="term" value="C:cytosol"/>
    <property type="evidence" value="ECO:0007669"/>
    <property type="project" value="TreeGrafter"/>
</dbReference>
<dbReference type="GO" id="GO:0042709">
    <property type="term" value="C:succinate-CoA ligase complex"/>
    <property type="evidence" value="ECO:0007669"/>
    <property type="project" value="TreeGrafter"/>
</dbReference>
<dbReference type="GO" id="GO:0005524">
    <property type="term" value="F:ATP binding"/>
    <property type="evidence" value="ECO:0007669"/>
    <property type="project" value="UniProtKB-UniRule"/>
</dbReference>
<dbReference type="GO" id="GO:0000287">
    <property type="term" value="F:magnesium ion binding"/>
    <property type="evidence" value="ECO:0007669"/>
    <property type="project" value="UniProtKB-UniRule"/>
</dbReference>
<dbReference type="GO" id="GO:0004775">
    <property type="term" value="F:succinate-CoA ligase (ADP-forming) activity"/>
    <property type="evidence" value="ECO:0007669"/>
    <property type="project" value="UniProtKB-UniRule"/>
</dbReference>
<dbReference type="GO" id="GO:0004776">
    <property type="term" value="F:succinate-CoA ligase (GDP-forming) activity"/>
    <property type="evidence" value="ECO:0007669"/>
    <property type="project" value="RHEA"/>
</dbReference>
<dbReference type="GO" id="GO:0006104">
    <property type="term" value="P:succinyl-CoA metabolic process"/>
    <property type="evidence" value="ECO:0007669"/>
    <property type="project" value="TreeGrafter"/>
</dbReference>
<dbReference type="GO" id="GO:0006099">
    <property type="term" value="P:tricarboxylic acid cycle"/>
    <property type="evidence" value="ECO:0007669"/>
    <property type="project" value="UniProtKB-UniRule"/>
</dbReference>
<dbReference type="FunFam" id="3.30.1490.20:FF:000002">
    <property type="entry name" value="Succinate--CoA ligase [ADP-forming] subunit beta"/>
    <property type="match status" value="1"/>
</dbReference>
<dbReference type="FunFam" id="3.30.470.20:FF:000002">
    <property type="entry name" value="Succinate--CoA ligase [ADP-forming] subunit beta"/>
    <property type="match status" value="1"/>
</dbReference>
<dbReference type="FunFam" id="3.40.50.261:FF:000001">
    <property type="entry name" value="Succinate--CoA ligase [ADP-forming] subunit beta"/>
    <property type="match status" value="1"/>
</dbReference>
<dbReference type="Gene3D" id="3.30.1490.20">
    <property type="entry name" value="ATP-grasp fold, A domain"/>
    <property type="match status" value="1"/>
</dbReference>
<dbReference type="Gene3D" id="3.30.470.20">
    <property type="entry name" value="ATP-grasp fold, B domain"/>
    <property type="match status" value="1"/>
</dbReference>
<dbReference type="Gene3D" id="3.40.50.261">
    <property type="entry name" value="Succinyl-CoA synthetase domains"/>
    <property type="match status" value="1"/>
</dbReference>
<dbReference type="HAMAP" id="MF_00558">
    <property type="entry name" value="Succ_CoA_beta"/>
    <property type="match status" value="1"/>
</dbReference>
<dbReference type="InterPro" id="IPR011761">
    <property type="entry name" value="ATP-grasp"/>
</dbReference>
<dbReference type="InterPro" id="IPR013650">
    <property type="entry name" value="ATP-grasp_succ-CoA_synth-type"/>
</dbReference>
<dbReference type="InterPro" id="IPR013815">
    <property type="entry name" value="ATP_grasp_subdomain_1"/>
</dbReference>
<dbReference type="InterPro" id="IPR017866">
    <property type="entry name" value="Succ-CoA_synthase_bsu_CS"/>
</dbReference>
<dbReference type="InterPro" id="IPR005811">
    <property type="entry name" value="SUCC_ACL_C"/>
</dbReference>
<dbReference type="InterPro" id="IPR005809">
    <property type="entry name" value="Succ_CoA_ligase-like_bsu"/>
</dbReference>
<dbReference type="InterPro" id="IPR016102">
    <property type="entry name" value="Succinyl-CoA_synth-like"/>
</dbReference>
<dbReference type="NCBIfam" id="NF001913">
    <property type="entry name" value="PRK00696.1"/>
    <property type="match status" value="1"/>
</dbReference>
<dbReference type="NCBIfam" id="TIGR01016">
    <property type="entry name" value="sucCoAbeta"/>
    <property type="match status" value="1"/>
</dbReference>
<dbReference type="PANTHER" id="PTHR11815:SF10">
    <property type="entry name" value="SUCCINATE--COA LIGASE [GDP-FORMING] SUBUNIT BETA, MITOCHONDRIAL"/>
    <property type="match status" value="1"/>
</dbReference>
<dbReference type="PANTHER" id="PTHR11815">
    <property type="entry name" value="SUCCINYL-COA SYNTHETASE BETA CHAIN"/>
    <property type="match status" value="1"/>
</dbReference>
<dbReference type="Pfam" id="PF08442">
    <property type="entry name" value="ATP-grasp_2"/>
    <property type="match status" value="1"/>
</dbReference>
<dbReference type="Pfam" id="PF00549">
    <property type="entry name" value="Ligase_CoA"/>
    <property type="match status" value="1"/>
</dbReference>
<dbReference type="PIRSF" id="PIRSF001554">
    <property type="entry name" value="SucCS_beta"/>
    <property type="match status" value="1"/>
</dbReference>
<dbReference type="SUPFAM" id="SSF56059">
    <property type="entry name" value="Glutathione synthetase ATP-binding domain-like"/>
    <property type="match status" value="1"/>
</dbReference>
<dbReference type="SUPFAM" id="SSF52210">
    <property type="entry name" value="Succinyl-CoA synthetase domains"/>
    <property type="match status" value="1"/>
</dbReference>
<dbReference type="PROSITE" id="PS50975">
    <property type="entry name" value="ATP_GRASP"/>
    <property type="match status" value="1"/>
</dbReference>
<dbReference type="PROSITE" id="PS01217">
    <property type="entry name" value="SUCCINYL_COA_LIG_3"/>
    <property type="match status" value="1"/>
</dbReference>
<name>SUCC_FRATO</name>
<evidence type="ECO:0000255" key="1">
    <source>
        <dbReference type="HAMAP-Rule" id="MF_00558"/>
    </source>
</evidence>
<sequence>MNLHEYQAKDLLESYGLKVQKGIVAHNPNEAAQAFDQLGGKFAVIKAQVHAGGRGKAGGVKVVKSSQEAREVAESLIGKNLVTFQTDAEGQPVNSVGIFEDVYPVTRELYLGAVVDRSSRKVTFMASTEGGVDIEEVAHNSPEKILKVEVDPLVGLQPFQAREVAFKLGLEGKQINDFVKTMLGAYKAFIECDFALFEINPLAVRENGEIVCVDGKINLDSNALYRHPKLLALRDKSQENAKELKASEHELNYVALEGNIGCMVNGAGLAMATMDIIQLYGGKPANFLDVGGGATKERVIEAFKLILDDENVKAVLINIFGGIVRCDMIAEAIIEAVKEVNVTVPVVVRLEGNNAEKGAKILADSGLKLIPADGLADAADKVVKSLG</sequence>